<organism>
    <name type="scientific">Streptococcus uberis (strain ATCC BAA-854 / 0140J)</name>
    <dbReference type="NCBI Taxonomy" id="218495"/>
    <lineage>
        <taxon>Bacteria</taxon>
        <taxon>Bacillati</taxon>
        <taxon>Bacillota</taxon>
        <taxon>Bacilli</taxon>
        <taxon>Lactobacillales</taxon>
        <taxon>Streptococcaceae</taxon>
        <taxon>Streptococcus</taxon>
    </lineage>
</organism>
<comment type="function">
    <text evidence="1">One of the primary rRNA binding proteins, it binds directly to 16S rRNA where it helps nucleate assembly of the platform of the 30S subunit by binding and bridging several RNA helices of the 16S rRNA.</text>
</comment>
<comment type="function">
    <text evidence="1">Forms an intersubunit bridge (bridge B4) with the 23S rRNA of the 50S subunit in the ribosome.</text>
</comment>
<comment type="subunit">
    <text evidence="1">Part of the 30S ribosomal subunit. Forms a bridge to the 50S subunit in the 70S ribosome, contacting the 23S rRNA.</text>
</comment>
<comment type="similarity">
    <text evidence="1">Belongs to the universal ribosomal protein uS15 family.</text>
</comment>
<keyword id="KW-1185">Reference proteome</keyword>
<keyword id="KW-0687">Ribonucleoprotein</keyword>
<keyword id="KW-0689">Ribosomal protein</keyword>
<keyword id="KW-0694">RNA-binding</keyword>
<keyword id="KW-0699">rRNA-binding</keyword>
<dbReference type="EMBL" id="AM946015">
    <property type="protein sequence ID" value="CAR40789.1"/>
    <property type="molecule type" value="Genomic_DNA"/>
</dbReference>
<dbReference type="RefSeq" id="WP_003083869.1">
    <property type="nucleotide sequence ID" value="NC_012004.1"/>
</dbReference>
<dbReference type="SMR" id="B9DTE2"/>
<dbReference type="STRING" id="218495.SUB0266"/>
<dbReference type="GeneID" id="93825559"/>
<dbReference type="KEGG" id="sub:SUB0266"/>
<dbReference type="eggNOG" id="COG0184">
    <property type="taxonomic scope" value="Bacteria"/>
</dbReference>
<dbReference type="HOGENOM" id="CLU_148518_0_0_9"/>
<dbReference type="OrthoDB" id="9799262at2"/>
<dbReference type="Proteomes" id="UP000000449">
    <property type="component" value="Chromosome"/>
</dbReference>
<dbReference type="GO" id="GO:0022627">
    <property type="term" value="C:cytosolic small ribosomal subunit"/>
    <property type="evidence" value="ECO:0007669"/>
    <property type="project" value="TreeGrafter"/>
</dbReference>
<dbReference type="GO" id="GO:0019843">
    <property type="term" value="F:rRNA binding"/>
    <property type="evidence" value="ECO:0007669"/>
    <property type="project" value="UniProtKB-UniRule"/>
</dbReference>
<dbReference type="GO" id="GO:0003735">
    <property type="term" value="F:structural constituent of ribosome"/>
    <property type="evidence" value="ECO:0007669"/>
    <property type="project" value="InterPro"/>
</dbReference>
<dbReference type="GO" id="GO:0006412">
    <property type="term" value="P:translation"/>
    <property type="evidence" value="ECO:0007669"/>
    <property type="project" value="UniProtKB-UniRule"/>
</dbReference>
<dbReference type="CDD" id="cd00353">
    <property type="entry name" value="Ribosomal_S15p_S13e"/>
    <property type="match status" value="1"/>
</dbReference>
<dbReference type="FunFam" id="1.10.287.10:FF:000002">
    <property type="entry name" value="30S ribosomal protein S15"/>
    <property type="match status" value="1"/>
</dbReference>
<dbReference type="Gene3D" id="6.10.250.3130">
    <property type="match status" value="1"/>
</dbReference>
<dbReference type="Gene3D" id="1.10.287.10">
    <property type="entry name" value="S15/NS1, RNA-binding"/>
    <property type="match status" value="1"/>
</dbReference>
<dbReference type="HAMAP" id="MF_01343_B">
    <property type="entry name" value="Ribosomal_uS15_B"/>
    <property type="match status" value="1"/>
</dbReference>
<dbReference type="InterPro" id="IPR000589">
    <property type="entry name" value="Ribosomal_uS15"/>
</dbReference>
<dbReference type="InterPro" id="IPR005290">
    <property type="entry name" value="Ribosomal_uS15_bac-type"/>
</dbReference>
<dbReference type="InterPro" id="IPR009068">
    <property type="entry name" value="uS15_NS1_RNA-bd_sf"/>
</dbReference>
<dbReference type="NCBIfam" id="TIGR00952">
    <property type="entry name" value="S15_bact"/>
    <property type="match status" value="1"/>
</dbReference>
<dbReference type="PANTHER" id="PTHR23321">
    <property type="entry name" value="RIBOSOMAL PROTEIN S15, BACTERIAL AND ORGANELLAR"/>
    <property type="match status" value="1"/>
</dbReference>
<dbReference type="PANTHER" id="PTHR23321:SF26">
    <property type="entry name" value="SMALL RIBOSOMAL SUBUNIT PROTEIN US15M"/>
    <property type="match status" value="1"/>
</dbReference>
<dbReference type="Pfam" id="PF00312">
    <property type="entry name" value="Ribosomal_S15"/>
    <property type="match status" value="1"/>
</dbReference>
<dbReference type="SMART" id="SM01387">
    <property type="entry name" value="Ribosomal_S15"/>
    <property type="match status" value="1"/>
</dbReference>
<dbReference type="SUPFAM" id="SSF47060">
    <property type="entry name" value="S15/NS1 RNA-binding domain"/>
    <property type="match status" value="1"/>
</dbReference>
<dbReference type="PROSITE" id="PS00362">
    <property type="entry name" value="RIBOSOMAL_S15"/>
    <property type="match status" value="1"/>
</dbReference>
<accession>B9DTE2</accession>
<sequence length="89" mass="10474">MAISKEKKNEIIAQYARHEGDTGSVEVQVAVLTWEINHLNGHIKEHKKDHATYRGLMKKIGHRRNLLAYLRRTDVNRYRELIQSLGLRR</sequence>
<feature type="chain" id="PRO_1000166441" description="Small ribosomal subunit protein uS15">
    <location>
        <begin position="1"/>
        <end position="89"/>
    </location>
</feature>
<protein>
    <recommendedName>
        <fullName evidence="1">Small ribosomal subunit protein uS15</fullName>
    </recommendedName>
    <alternativeName>
        <fullName evidence="2">30S ribosomal protein S15</fullName>
    </alternativeName>
</protein>
<reference key="1">
    <citation type="journal article" date="2009" name="BMC Genomics">
        <title>Evidence for niche adaptation in the genome of the bovine pathogen Streptococcus uberis.</title>
        <authorList>
            <person name="Ward P.N."/>
            <person name="Holden M.T.G."/>
            <person name="Leigh J.A."/>
            <person name="Lennard N."/>
            <person name="Bignell A."/>
            <person name="Barron A."/>
            <person name="Clark L."/>
            <person name="Quail M.A."/>
            <person name="Woodward J."/>
            <person name="Barrell B.G."/>
            <person name="Egan S.A."/>
            <person name="Field T.R."/>
            <person name="Maskell D."/>
            <person name="Kehoe M."/>
            <person name="Dowson C.G."/>
            <person name="Chanter N."/>
            <person name="Whatmore A.M."/>
            <person name="Bentley S.D."/>
            <person name="Parkhill J."/>
        </authorList>
    </citation>
    <scope>NUCLEOTIDE SEQUENCE [LARGE SCALE GENOMIC DNA]</scope>
    <source>
        <strain>ATCC BAA-854 / 0140J</strain>
    </source>
</reference>
<gene>
    <name evidence="1" type="primary">rpsO</name>
    <name type="ordered locus">SUB0266</name>
</gene>
<proteinExistence type="inferred from homology"/>
<name>RS15_STRU0</name>
<evidence type="ECO:0000255" key="1">
    <source>
        <dbReference type="HAMAP-Rule" id="MF_01343"/>
    </source>
</evidence>
<evidence type="ECO:0000305" key="2"/>